<reference key="1">
    <citation type="journal article" date="2004" name="Nature">
        <title>Genome evolution in yeasts.</title>
        <authorList>
            <person name="Dujon B."/>
            <person name="Sherman D."/>
            <person name="Fischer G."/>
            <person name="Durrens P."/>
            <person name="Casaregola S."/>
            <person name="Lafontaine I."/>
            <person name="de Montigny J."/>
            <person name="Marck C."/>
            <person name="Neuveglise C."/>
            <person name="Talla E."/>
            <person name="Goffard N."/>
            <person name="Frangeul L."/>
            <person name="Aigle M."/>
            <person name="Anthouard V."/>
            <person name="Babour A."/>
            <person name="Barbe V."/>
            <person name="Barnay S."/>
            <person name="Blanchin S."/>
            <person name="Beckerich J.-M."/>
            <person name="Beyne E."/>
            <person name="Bleykasten C."/>
            <person name="Boisrame A."/>
            <person name="Boyer J."/>
            <person name="Cattolico L."/>
            <person name="Confanioleri F."/>
            <person name="de Daruvar A."/>
            <person name="Despons L."/>
            <person name="Fabre E."/>
            <person name="Fairhead C."/>
            <person name="Ferry-Dumazet H."/>
            <person name="Groppi A."/>
            <person name="Hantraye F."/>
            <person name="Hennequin C."/>
            <person name="Jauniaux N."/>
            <person name="Joyet P."/>
            <person name="Kachouri R."/>
            <person name="Kerrest A."/>
            <person name="Koszul R."/>
            <person name="Lemaire M."/>
            <person name="Lesur I."/>
            <person name="Ma L."/>
            <person name="Muller H."/>
            <person name="Nicaud J.-M."/>
            <person name="Nikolski M."/>
            <person name="Oztas S."/>
            <person name="Ozier-Kalogeropoulos O."/>
            <person name="Pellenz S."/>
            <person name="Potier S."/>
            <person name="Richard G.-F."/>
            <person name="Straub M.-L."/>
            <person name="Suleau A."/>
            <person name="Swennen D."/>
            <person name="Tekaia F."/>
            <person name="Wesolowski-Louvel M."/>
            <person name="Westhof E."/>
            <person name="Wirth B."/>
            <person name="Zeniou-Meyer M."/>
            <person name="Zivanovic Y."/>
            <person name="Bolotin-Fukuhara M."/>
            <person name="Thierry A."/>
            <person name="Bouchier C."/>
            <person name="Caudron B."/>
            <person name="Scarpelli C."/>
            <person name="Gaillardin C."/>
            <person name="Weissenbach J."/>
            <person name="Wincker P."/>
            <person name="Souciet J.-L."/>
        </authorList>
    </citation>
    <scope>NUCLEOTIDE SEQUENCE [LARGE SCALE GENOMIC DNA]</scope>
    <source>
        <strain>CLIB 122 / E 150</strain>
    </source>
</reference>
<organism>
    <name type="scientific">Yarrowia lipolytica (strain CLIB 122 / E 150)</name>
    <name type="common">Yeast</name>
    <name type="synonym">Candida lipolytica</name>
    <dbReference type="NCBI Taxonomy" id="284591"/>
    <lineage>
        <taxon>Eukaryota</taxon>
        <taxon>Fungi</taxon>
        <taxon>Dikarya</taxon>
        <taxon>Ascomycota</taxon>
        <taxon>Saccharomycotina</taxon>
        <taxon>Dipodascomycetes</taxon>
        <taxon>Dipodascales</taxon>
        <taxon>Dipodascales incertae sedis</taxon>
        <taxon>Yarrowia</taxon>
    </lineage>
</organism>
<sequence length="417" mass="44230">MTRGVPRLAVAARHFSTAEAAGVKVAAQDGQSPISDLSVVLRGGSRYATVPGVSHILEKFAFQNTVPKSALRFVRELELFGGKLYTHTTREHIVLRTQFLKQDLPYFVDAFANVLKETKFQQFELTERVAPVAELDLLKRESDPAFTALEAAHEVAFRTGLGNSVYAQGYSPVTLEDVKEFARQVYAKQNVAVVGNNVVPADLQQLVGTAFADLQEGSKVTQAGTTTLHGGEARVRTSTGNALTIALPIAEPKPVYHALASFLGGPASMPWSVGASPLAQATVGTHTSVKATYHNYGDAGLFAITIKGDSPAEISQVAHKAVQALKDTGAEVTEEQAARAYAKSKFAAAEAFENPDSSASVIGMELLSGVSRIAPENVQKFTPAELSEAAAQLSASAKPVVAAVGQVHALPFADELF</sequence>
<feature type="transit peptide" description="Mitochondrion" evidence="1">
    <location>
        <begin position="1"/>
        <end position="22"/>
    </location>
</feature>
<feature type="chain" id="PRO_0000026800" description="Cytochrome b-c1 complex subunit 2, mitochondrial">
    <location>
        <begin position="23"/>
        <end position="417"/>
    </location>
</feature>
<feature type="strand" evidence="4">
    <location>
        <begin position="16"/>
        <end position="20"/>
    </location>
</feature>
<feature type="strand" evidence="4">
    <location>
        <begin position="23"/>
        <end position="28"/>
    </location>
</feature>
<feature type="strand" evidence="4">
    <location>
        <begin position="31"/>
        <end position="42"/>
    </location>
</feature>
<feature type="helix" evidence="4">
    <location>
        <begin position="45"/>
        <end position="47"/>
    </location>
</feature>
<feature type="helix" evidence="4">
    <location>
        <begin position="53"/>
        <end position="59"/>
    </location>
</feature>
<feature type="turn" evidence="4">
    <location>
        <begin position="60"/>
        <end position="62"/>
    </location>
</feature>
<feature type="strand" evidence="4">
    <location>
        <begin position="65"/>
        <end position="68"/>
    </location>
</feature>
<feature type="helix" evidence="4">
    <location>
        <begin position="70"/>
        <end position="79"/>
    </location>
</feature>
<feature type="strand" evidence="4">
    <location>
        <begin position="83"/>
        <end position="88"/>
    </location>
</feature>
<feature type="strand" evidence="4">
    <location>
        <begin position="93"/>
        <end position="100"/>
    </location>
</feature>
<feature type="helix" evidence="4">
    <location>
        <begin position="101"/>
        <end position="103"/>
    </location>
</feature>
<feature type="helix" evidence="4">
    <location>
        <begin position="104"/>
        <end position="117"/>
    </location>
</feature>
<feature type="helix" evidence="4">
    <location>
        <begin position="122"/>
        <end position="127"/>
    </location>
</feature>
<feature type="helix" evidence="4">
    <location>
        <begin position="129"/>
        <end position="141"/>
    </location>
</feature>
<feature type="helix" evidence="4">
    <location>
        <begin position="144"/>
        <end position="157"/>
    </location>
</feature>
<feature type="helix" evidence="4">
    <location>
        <begin position="160"/>
        <end position="162"/>
    </location>
</feature>
<feature type="strand" evidence="5">
    <location>
        <begin position="169"/>
        <end position="171"/>
    </location>
</feature>
<feature type="helix" evidence="4">
    <location>
        <begin position="175"/>
        <end position="185"/>
    </location>
</feature>
<feature type="helix" evidence="4">
    <location>
        <begin position="188"/>
        <end position="190"/>
    </location>
</feature>
<feature type="strand" evidence="4">
    <location>
        <begin position="191"/>
        <end position="196"/>
    </location>
</feature>
<feature type="helix" evidence="4">
    <location>
        <begin position="200"/>
        <end position="210"/>
    </location>
</feature>
<feature type="strand" evidence="4">
    <location>
        <begin position="211"/>
        <end position="214"/>
    </location>
</feature>
<feature type="strand" evidence="4">
    <location>
        <begin position="231"/>
        <end position="235"/>
    </location>
</feature>
<feature type="strand" evidence="4">
    <location>
        <begin position="241"/>
        <end position="251"/>
    </location>
</feature>
<feature type="helix" evidence="4">
    <location>
        <begin position="255"/>
        <end position="263"/>
    </location>
</feature>
<feature type="helix" evidence="4">
    <location>
        <begin position="277"/>
        <end position="280"/>
    </location>
</feature>
<feature type="turn" evidence="4">
    <location>
        <begin position="281"/>
        <end position="284"/>
    </location>
</feature>
<feature type="strand" evidence="4">
    <location>
        <begin position="285"/>
        <end position="295"/>
    </location>
</feature>
<feature type="strand" evidence="4">
    <location>
        <begin position="300"/>
        <end position="309"/>
    </location>
</feature>
<feature type="helix" evidence="4">
    <location>
        <begin position="311"/>
        <end position="330"/>
    </location>
</feature>
<feature type="helix" evidence="4">
    <location>
        <begin position="334"/>
        <end position="353"/>
    </location>
</feature>
<feature type="helix" evidence="4">
    <location>
        <begin position="355"/>
        <end position="367"/>
    </location>
</feature>
<feature type="helix" evidence="4">
    <location>
        <begin position="375"/>
        <end position="377"/>
    </location>
</feature>
<feature type="helix" evidence="4">
    <location>
        <begin position="383"/>
        <end position="394"/>
    </location>
</feature>
<feature type="strand" evidence="4">
    <location>
        <begin position="400"/>
        <end position="406"/>
    </location>
</feature>
<feature type="helix" evidence="4">
    <location>
        <begin position="407"/>
        <end position="409"/>
    </location>
</feature>
<feature type="helix" evidence="4">
    <location>
        <begin position="413"/>
        <end position="415"/>
    </location>
</feature>
<comment type="function">
    <text evidence="2">Component of the ubiquinol-cytochrome c oxidoreductase, a multisubunit transmembrane complex that is part of the mitochondrial electron transport chain which drives oxidative phosphorylation. The respiratory chain contains 3 multisubunit complexes succinate dehydrogenase (complex II, CII), ubiquinol-cytochrome c oxidoreductase (cytochrome b-c1 complex, complex III, CIII) and cytochrome c oxidase (complex IV, CIV), that cooperate to transfer electrons derived from NADH and succinate to molecular oxygen, creating an electrochemical gradient over the inner membrane that drives transmembrane transport and the ATP synthase. The cytochrome b-c1 complex catalyzes electron transfer from ubiquinol to cytochrome c, linking this redox reaction to translocation of protons across the mitochondrial inner membrane, with protons being carried across the membrane as hydrogens on the quinol. In the process called Q cycle, 2 protons are consumed from the matrix, 4 protons are released into the intermembrane space and 2 electrons are passed to cytochrome c.</text>
</comment>
<comment type="subunit">
    <text evidence="2">Component of the ubiquinol-cytochrome c oxidoreductase (cytochrome b-c1 complex, complex III, CIII), a multisubunit enzyme composed of 3 respiratory subunits cytochrome b, cytochrome c1 and Rieske protein, 2 core protein subunits, and additional low-molecular weight protein subunits. The complex exists as an obligatory dimer and forms supercomplexes (SCs) in the inner mitochondrial membrane with cytochrome c oxidase (complex IV, CIV).</text>
</comment>
<comment type="subcellular location">
    <subcellularLocation>
        <location evidence="2">Mitochondrion inner membrane</location>
        <topology evidence="2">Peripheral membrane protein</topology>
        <orientation evidence="2">Matrix side</orientation>
    </subcellularLocation>
</comment>
<comment type="similarity">
    <text evidence="3">Belongs to the peptidase M16 family. UQCRC2/QCR2 subfamily.</text>
</comment>
<comment type="caution">
    <text evidence="3">Does not seem to have protease activity as it lacks the zinc-binding site.</text>
</comment>
<accession>Q6C2E3</accession>
<gene>
    <name type="primary">QCR2</name>
    <name type="ordered locus">YALI0F08613g</name>
</gene>
<protein>
    <recommendedName>
        <fullName>Cytochrome b-c1 complex subunit 2, mitochondrial</fullName>
    </recommendedName>
    <alternativeName>
        <fullName>Complex III subunit 2</fullName>
    </alternativeName>
    <alternativeName>
        <fullName>Core protein II</fullName>
    </alternativeName>
    <alternativeName>
        <fullName>Ubiquinol-cytochrome-c reductase complex core protein 2</fullName>
    </alternativeName>
</protein>
<proteinExistence type="evidence at protein level"/>
<evidence type="ECO:0000250" key="1"/>
<evidence type="ECO:0000250" key="2">
    <source>
        <dbReference type="UniProtKB" id="P07257"/>
    </source>
</evidence>
<evidence type="ECO:0000305" key="3"/>
<evidence type="ECO:0007829" key="4">
    <source>
        <dbReference type="PDB" id="8AB6"/>
    </source>
</evidence>
<evidence type="ECO:0007829" key="5">
    <source>
        <dbReference type="PDB" id="8ABL"/>
    </source>
</evidence>
<name>QCR2_YARLI</name>
<keyword id="KW-0002">3D-structure</keyword>
<keyword id="KW-0249">Electron transport</keyword>
<keyword id="KW-0472">Membrane</keyword>
<keyword id="KW-0496">Mitochondrion</keyword>
<keyword id="KW-0999">Mitochondrion inner membrane</keyword>
<keyword id="KW-1185">Reference proteome</keyword>
<keyword id="KW-0679">Respiratory chain</keyword>
<keyword id="KW-0809">Transit peptide</keyword>
<keyword id="KW-0813">Transport</keyword>
<dbReference type="EMBL" id="CR382132">
    <property type="protein sequence ID" value="CAG77976.1"/>
    <property type="molecule type" value="Genomic_DNA"/>
</dbReference>
<dbReference type="RefSeq" id="XP_505169.1">
    <property type="nucleotide sequence ID" value="XM_505169.1"/>
</dbReference>
<dbReference type="PDB" id="8AB6">
    <property type="method" value="EM"/>
    <property type="resolution" value="2.00 A"/>
    <property type="chains" value="B/M=1-417"/>
</dbReference>
<dbReference type="PDB" id="8AB7">
    <property type="method" value="EM"/>
    <property type="resolution" value="3.30 A"/>
    <property type="chains" value="B/M=1-417"/>
</dbReference>
<dbReference type="PDB" id="8AB8">
    <property type="method" value="EM"/>
    <property type="resolution" value="2.60 A"/>
    <property type="chains" value="B/M=1-417"/>
</dbReference>
<dbReference type="PDB" id="8AB9">
    <property type="method" value="EM"/>
    <property type="resolution" value="3.30 A"/>
    <property type="chains" value="B/M=1-417"/>
</dbReference>
<dbReference type="PDB" id="8ABA">
    <property type="method" value="EM"/>
    <property type="resolution" value="3.20 A"/>
    <property type="chains" value="B/M=1-417"/>
</dbReference>
<dbReference type="PDB" id="8ABB">
    <property type="method" value="EM"/>
    <property type="resolution" value="3.20 A"/>
    <property type="chains" value="B/M=1-417"/>
</dbReference>
<dbReference type="PDB" id="8ABE">
    <property type="method" value="EM"/>
    <property type="resolution" value="2.30 A"/>
    <property type="chains" value="B/M=1-417"/>
</dbReference>
<dbReference type="PDB" id="8ABF">
    <property type="method" value="EM"/>
    <property type="resolution" value="2.30 A"/>
    <property type="chains" value="B/M=1-417"/>
</dbReference>
<dbReference type="PDB" id="8ABG">
    <property type="method" value="EM"/>
    <property type="resolution" value="2.30 A"/>
    <property type="chains" value="B/M=1-417"/>
</dbReference>
<dbReference type="PDB" id="8ABH">
    <property type="method" value="EM"/>
    <property type="resolution" value="3.00 A"/>
    <property type="chains" value="B/M=1-417"/>
</dbReference>
<dbReference type="PDB" id="8ABI">
    <property type="method" value="EM"/>
    <property type="resolution" value="3.00 A"/>
    <property type="chains" value="B/M=1-417"/>
</dbReference>
<dbReference type="PDB" id="8ABJ">
    <property type="method" value="EM"/>
    <property type="resolution" value="3.70 A"/>
    <property type="chains" value="B/M=1-417"/>
</dbReference>
<dbReference type="PDB" id="8ABK">
    <property type="method" value="EM"/>
    <property type="resolution" value="2.50 A"/>
    <property type="chains" value="B/M=1-417"/>
</dbReference>
<dbReference type="PDB" id="8ABL">
    <property type="method" value="EM"/>
    <property type="resolution" value="2.10 A"/>
    <property type="chains" value="B/M=1-417"/>
</dbReference>
<dbReference type="PDB" id="8ABM">
    <property type="method" value="EM"/>
    <property type="resolution" value="2.80 A"/>
    <property type="chains" value="B/M=1-417"/>
</dbReference>
<dbReference type="PDB" id="8AC3">
    <property type="method" value="EM"/>
    <property type="resolution" value="2.80 A"/>
    <property type="chains" value="B/M=1-417"/>
</dbReference>
<dbReference type="PDB" id="8AC4">
    <property type="method" value="EM"/>
    <property type="resolution" value="2.70 A"/>
    <property type="chains" value="B/M=1-417"/>
</dbReference>
<dbReference type="PDB" id="8AC5">
    <property type="method" value="EM"/>
    <property type="resolution" value="3.10 A"/>
    <property type="chains" value="B/M=1-417"/>
</dbReference>
<dbReference type="PDBsum" id="8AB6"/>
<dbReference type="PDBsum" id="8AB7"/>
<dbReference type="PDBsum" id="8AB8"/>
<dbReference type="PDBsum" id="8AB9"/>
<dbReference type="PDBsum" id="8ABA"/>
<dbReference type="PDBsum" id="8ABB"/>
<dbReference type="PDBsum" id="8ABE"/>
<dbReference type="PDBsum" id="8ABF"/>
<dbReference type="PDBsum" id="8ABG"/>
<dbReference type="PDBsum" id="8ABH"/>
<dbReference type="PDBsum" id="8ABI"/>
<dbReference type="PDBsum" id="8ABJ"/>
<dbReference type="PDBsum" id="8ABK"/>
<dbReference type="PDBsum" id="8ABL"/>
<dbReference type="PDBsum" id="8ABM"/>
<dbReference type="PDBsum" id="8AC3"/>
<dbReference type="PDBsum" id="8AC4"/>
<dbReference type="PDBsum" id="8AC5"/>
<dbReference type="EMDB" id="EMD-15312"/>
<dbReference type="EMDB" id="EMD-15313"/>
<dbReference type="EMDB" id="EMD-15314"/>
<dbReference type="EMDB" id="EMD-15315"/>
<dbReference type="EMDB" id="EMD-15316"/>
<dbReference type="EMDB" id="EMD-15317"/>
<dbReference type="EMDB" id="EMD-15318"/>
<dbReference type="EMDB" id="EMD-15319"/>
<dbReference type="EMDB" id="EMD-15320"/>
<dbReference type="EMDB" id="EMD-15321"/>
<dbReference type="EMDB" id="EMD-15322"/>
<dbReference type="EMDB" id="EMD-15323"/>
<dbReference type="EMDB" id="EMD-15324"/>
<dbReference type="EMDB" id="EMD-15325"/>
<dbReference type="EMDB" id="EMD-15326"/>
<dbReference type="EMDB" id="EMD-15332"/>
<dbReference type="EMDB" id="EMD-15333"/>
<dbReference type="EMDB" id="EMD-15334"/>
<dbReference type="SMR" id="Q6C2E3"/>
<dbReference type="FunCoup" id="Q6C2E3">
    <property type="interactions" value="301"/>
</dbReference>
<dbReference type="STRING" id="284591.Q6C2E3"/>
<dbReference type="EnsemblFungi" id="CAG77976">
    <property type="protein sequence ID" value="CAG77976"/>
    <property type="gene ID" value="YALI0_F08613g"/>
</dbReference>
<dbReference type="KEGG" id="yli:2908481"/>
<dbReference type="VEuPathDB" id="FungiDB:YALI0_F08613g"/>
<dbReference type="HOGENOM" id="CLU_009902_0_1_1"/>
<dbReference type="InParanoid" id="Q6C2E3"/>
<dbReference type="OMA" id="APKFALY"/>
<dbReference type="OrthoDB" id="115379at4891"/>
<dbReference type="Proteomes" id="UP000001300">
    <property type="component" value="Chromosome F"/>
</dbReference>
<dbReference type="GO" id="GO:0030061">
    <property type="term" value="C:mitochondrial crista"/>
    <property type="evidence" value="ECO:0007669"/>
    <property type="project" value="EnsemblFungi"/>
</dbReference>
<dbReference type="GO" id="GO:0005739">
    <property type="term" value="C:mitochondrion"/>
    <property type="evidence" value="ECO:0000318"/>
    <property type="project" value="GO_Central"/>
</dbReference>
<dbReference type="GO" id="GO:0045275">
    <property type="term" value="C:respiratory chain complex III"/>
    <property type="evidence" value="ECO:0007669"/>
    <property type="project" value="EnsemblFungi"/>
</dbReference>
<dbReference type="GO" id="GO:0046872">
    <property type="term" value="F:metal ion binding"/>
    <property type="evidence" value="ECO:0007669"/>
    <property type="project" value="InterPro"/>
</dbReference>
<dbReference type="GO" id="GO:0004222">
    <property type="term" value="F:metalloendopeptidase activity"/>
    <property type="evidence" value="ECO:0007669"/>
    <property type="project" value="InterPro"/>
</dbReference>
<dbReference type="GO" id="GO:0008121">
    <property type="term" value="F:ubiquinol-cytochrome-c reductase activity"/>
    <property type="evidence" value="ECO:0007669"/>
    <property type="project" value="EnsemblFungi"/>
</dbReference>
<dbReference type="GO" id="GO:0006122">
    <property type="term" value="P:mitochondrial electron transport, ubiquinol to cytochrome c"/>
    <property type="evidence" value="ECO:0007669"/>
    <property type="project" value="EnsemblFungi"/>
</dbReference>
<dbReference type="GO" id="GO:0006508">
    <property type="term" value="P:proteolysis"/>
    <property type="evidence" value="ECO:0007669"/>
    <property type="project" value="InterPro"/>
</dbReference>
<dbReference type="FunFam" id="3.30.830.10:FF:000021">
    <property type="entry name" value="Cytochrome b-c1 complex subunit 2"/>
    <property type="match status" value="1"/>
</dbReference>
<dbReference type="Gene3D" id="3.30.830.10">
    <property type="entry name" value="Metalloenzyme, LuxS/M16 peptidase-like"/>
    <property type="match status" value="2"/>
</dbReference>
<dbReference type="InterPro" id="IPR011249">
    <property type="entry name" value="Metalloenz_LuxS/M16"/>
</dbReference>
<dbReference type="InterPro" id="IPR050361">
    <property type="entry name" value="MPP/UQCRC_Complex"/>
</dbReference>
<dbReference type="InterPro" id="IPR011765">
    <property type="entry name" value="Pept_M16_N"/>
</dbReference>
<dbReference type="InterPro" id="IPR001431">
    <property type="entry name" value="Pept_M16_Zn_BS"/>
</dbReference>
<dbReference type="InterPro" id="IPR007863">
    <property type="entry name" value="Peptidase_M16_C"/>
</dbReference>
<dbReference type="PANTHER" id="PTHR11851:SF209">
    <property type="entry name" value="CYTOCHROME B-C1 COMPLEX SUBUNIT 2, MITOCHONDRIAL"/>
    <property type="match status" value="1"/>
</dbReference>
<dbReference type="PANTHER" id="PTHR11851">
    <property type="entry name" value="METALLOPROTEASE"/>
    <property type="match status" value="1"/>
</dbReference>
<dbReference type="Pfam" id="PF00675">
    <property type="entry name" value="Peptidase_M16"/>
    <property type="match status" value="1"/>
</dbReference>
<dbReference type="Pfam" id="PF05193">
    <property type="entry name" value="Peptidase_M16_C"/>
    <property type="match status" value="1"/>
</dbReference>
<dbReference type="SUPFAM" id="SSF63411">
    <property type="entry name" value="LuxS/MPP-like metallohydrolase"/>
    <property type="match status" value="2"/>
</dbReference>
<dbReference type="PROSITE" id="PS00143">
    <property type="entry name" value="INSULINASE"/>
    <property type="match status" value="1"/>
</dbReference>